<protein>
    <recommendedName>
        <fullName evidence="1">CTP synthase</fullName>
        <ecNumber evidence="1">6.3.4.2</ecNumber>
    </recommendedName>
    <alternativeName>
        <fullName evidence="1">Cytidine 5'-triphosphate synthase</fullName>
    </alternativeName>
    <alternativeName>
        <fullName evidence="1">Cytidine triphosphate synthetase</fullName>
        <shortName evidence="1">CTP synthetase</shortName>
        <shortName evidence="1">CTPS</shortName>
    </alternativeName>
    <alternativeName>
        <fullName evidence="1">UTP--ammonia ligase</fullName>
    </alternativeName>
</protein>
<name>PYRG_ANADE</name>
<sequence>MVKRGKKTKYLFVTGGVVSSLGKGLSAASIGALLENRGLEVQHLKLDPYINVDPGTMSPFQHGEVFVTDDGAETDLDLGHYERFTSAKMTRRNNYTTGRIYQNVIQRERRGEYLGKTVQVIPHITDEIKAVIREAAGGADILIVEVGGTVGDIESLPFLEAIRQMKYDVGEENAVYAHLTLVPFIAAAGELKTKPTQHSVKELREIGIQPDLLLCRSDREIPRDMKDKIALFCNVDPSAVFTALDVPSIYEVPLSLHREGLDDKLAELFNIWSRAPRLERWETIVDKVKNPRRGEVRIGIVGKYVELHESYKSLNEALVHGGIANDARVKLAFIDSTKLEEGDLSDLDKVDAILVPGGFGIRGTEGKILGVKYAREHKVPFFGICLGLQMAVIEMARNVLGLAGANSLEFDEQTPHPVVTLMEGQKGVTDKGGTMRLGAYPCALKEGTKARALYGADLVHERHRHRFEFNNDYRAQFEAAGMVFSGVNPDLGLVEMIELPGQHFVGCQFHPEFRSKPFAPHPLFAGFVKAALEHRDAQQRQPSAEVKKLPVGKNG</sequence>
<organism>
    <name type="scientific">Anaeromyxobacter dehalogenans (strain 2CP-C)</name>
    <dbReference type="NCBI Taxonomy" id="290397"/>
    <lineage>
        <taxon>Bacteria</taxon>
        <taxon>Pseudomonadati</taxon>
        <taxon>Myxococcota</taxon>
        <taxon>Myxococcia</taxon>
        <taxon>Myxococcales</taxon>
        <taxon>Cystobacterineae</taxon>
        <taxon>Anaeromyxobacteraceae</taxon>
        <taxon>Anaeromyxobacter</taxon>
    </lineage>
</organism>
<accession>Q2IH81</accession>
<keyword id="KW-0067">ATP-binding</keyword>
<keyword id="KW-0315">Glutamine amidotransferase</keyword>
<keyword id="KW-0436">Ligase</keyword>
<keyword id="KW-0460">Magnesium</keyword>
<keyword id="KW-0479">Metal-binding</keyword>
<keyword id="KW-0547">Nucleotide-binding</keyword>
<keyword id="KW-0665">Pyrimidine biosynthesis</keyword>
<keyword id="KW-1185">Reference proteome</keyword>
<proteinExistence type="inferred from homology"/>
<feature type="chain" id="PRO_0000266053" description="CTP synthase">
    <location>
        <begin position="1"/>
        <end position="555"/>
    </location>
</feature>
<feature type="domain" description="Glutamine amidotransferase type-1" evidence="1">
    <location>
        <begin position="297"/>
        <end position="537"/>
    </location>
</feature>
<feature type="region of interest" description="Amidoligase domain" evidence="1">
    <location>
        <begin position="1"/>
        <end position="271"/>
    </location>
</feature>
<feature type="region of interest" description="Disordered" evidence="2">
    <location>
        <begin position="536"/>
        <end position="555"/>
    </location>
</feature>
<feature type="active site" description="Nucleophile; for glutamine hydrolysis" evidence="1">
    <location>
        <position position="385"/>
    </location>
</feature>
<feature type="active site" evidence="1">
    <location>
        <position position="510"/>
    </location>
</feature>
<feature type="active site" evidence="1">
    <location>
        <position position="512"/>
    </location>
</feature>
<feature type="binding site" evidence="1">
    <location>
        <position position="19"/>
    </location>
    <ligand>
        <name>CTP</name>
        <dbReference type="ChEBI" id="CHEBI:37563"/>
        <note>allosteric inhibitor</note>
    </ligand>
</feature>
<feature type="binding site" evidence="1">
    <location>
        <position position="19"/>
    </location>
    <ligand>
        <name>UTP</name>
        <dbReference type="ChEBI" id="CHEBI:46398"/>
    </ligand>
</feature>
<feature type="binding site" evidence="1">
    <location>
        <begin position="20"/>
        <end position="25"/>
    </location>
    <ligand>
        <name>ATP</name>
        <dbReference type="ChEBI" id="CHEBI:30616"/>
    </ligand>
</feature>
<feature type="binding site" evidence="1">
    <location>
        <position position="77"/>
    </location>
    <ligand>
        <name>ATP</name>
        <dbReference type="ChEBI" id="CHEBI:30616"/>
    </ligand>
</feature>
<feature type="binding site" evidence="1">
    <location>
        <position position="77"/>
    </location>
    <ligand>
        <name>Mg(2+)</name>
        <dbReference type="ChEBI" id="CHEBI:18420"/>
    </ligand>
</feature>
<feature type="binding site" evidence="1">
    <location>
        <position position="145"/>
    </location>
    <ligand>
        <name>Mg(2+)</name>
        <dbReference type="ChEBI" id="CHEBI:18420"/>
    </ligand>
</feature>
<feature type="binding site" evidence="1">
    <location>
        <begin position="152"/>
        <end position="154"/>
    </location>
    <ligand>
        <name>CTP</name>
        <dbReference type="ChEBI" id="CHEBI:37563"/>
        <note>allosteric inhibitor</note>
    </ligand>
</feature>
<feature type="binding site" evidence="1">
    <location>
        <begin position="192"/>
        <end position="197"/>
    </location>
    <ligand>
        <name>CTP</name>
        <dbReference type="ChEBI" id="CHEBI:37563"/>
        <note>allosteric inhibitor</note>
    </ligand>
</feature>
<feature type="binding site" evidence="1">
    <location>
        <begin position="192"/>
        <end position="197"/>
    </location>
    <ligand>
        <name>UTP</name>
        <dbReference type="ChEBI" id="CHEBI:46398"/>
    </ligand>
</feature>
<feature type="binding site" evidence="1">
    <location>
        <position position="228"/>
    </location>
    <ligand>
        <name>CTP</name>
        <dbReference type="ChEBI" id="CHEBI:37563"/>
        <note>allosteric inhibitor</note>
    </ligand>
</feature>
<feature type="binding site" evidence="1">
    <location>
        <position position="228"/>
    </location>
    <ligand>
        <name>UTP</name>
        <dbReference type="ChEBI" id="CHEBI:46398"/>
    </ligand>
</feature>
<feature type="binding site" evidence="1">
    <location>
        <position position="358"/>
    </location>
    <ligand>
        <name>L-glutamine</name>
        <dbReference type="ChEBI" id="CHEBI:58359"/>
    </ligand>
</feature>
<feature type="binding site" evidence="1">
    <location>
        <begin position="386"/>
        <end position="389"/>
    </location>
    <ligand>
        <name>L-glutamine</name>
        <dbReference type="ChEBI" id="CHEBI:58359"/>
    </ligand>
</feature>
<feature type="binding site" evidence="1">
    <location>
        <position position="409"/>
    </location>
    <ligand>
        <name>L-glutamine</name>
        <dbReference type="ChEBI" id="CHEBI:58359"/>
    </ligand>
</feature>
<feature type="binding site" evidence="1">
    <location>
        <position position="466"/>
    </location>
    <ligand>
        <name>L-glutamine</name>
        <dbReference type="ChEBI" id="CHEBI:58359"/>
    </ligand>
</feature>
<evidence type="ECO:0000255" key="1">
    <source>
        <dbReference type="HAMAP-Rule" id="MF_01227"/>
    </source>
</evidence>
<evidence type="ECO:0000256" key="2">
    <source>
        <dbReference type="SAM" id="MobiDB-lite"/>
    </source>
</evidence>
<gene>
    <name evidence="1" type="primary">pyrG</name>
    <name type="ordered locus">Adeh_4174</name>
</gene>
<comment type="function">
    <text evidence="1">Catalyzes the ATP-dependent amination of UTP to CTP with either L-glutamine or ammonia as the source of nitrogen. Regulates intracellular CTP levels through interactions with the four ribonucleotide triphosphates.</text>
</comment>
<comment type="catalytic activity">
    <reaction evidence="1">
        <text>UTP + L-glutamine + ATP + H2O = CTP + L-glutamate + ADP + phosphate + 2 H(+)</text>
        <dbReference type="Rhea" id="RHEA:26426"/>
        <dbReference type="ChEBI" id="CHEBI:15377"/>
        <dbReference type="ChEBI" id="CHEBI:15378"/>
        <dbReference type="ChEBI" id="CHEBI:29985"/>
        <dbReference type="ChEBI" id="CHEBI:30616"/>
        <dbReference type="ChEBI" id="CHEBI:37563"/>
        <dbReference type="ChEBI" id="CHEBI:43474"/>
        <dbReference type="ChEBI" id="CHEBI:46398"/>
        <dbReference type="ChEBI" id="CHEBI:58359"/>
        <dbReference type="ChEBI" id="CHEBI:456216"/>
        <dbReference type="EC" id="6.3.4.2"/>
    </reaction>
</comment>
<comment type="catalytic activity">
    <reaction evidence="1">
        <text>L-glutamine + H2O = L-glutamate + NH4(+)</text>
        <dbReference type="Rhea" id="RHEA:15889"/>
        <dbReference type="ChEBI" id="CHEBI:15377"/>
        <dbReference type="ChEBI" id="CHEBI:28938"/>
        <dbReference type="ChEBI" id="CHEBI:29985"/>
        <dbReference type="ChEBI" id="CHEBI:58359"/>
    </reaction>
</comment>
<comment type="catalytic activity">
    <reaction evidence="1">
        <text>UTP + NH4(+) + ATP = CTP + ADP + phosphate + 2 H(+)</text>
        <dbReference type="Rhea" id="RHEA:16597"/>
        <dbReference type="ChEBI" id="CHEBI:15378"/>
        <dbReference type="ChEBI" id="CHEBI:28938"/>
        <dbReference type="ChEBI" id="CHEBI:30616"/>
        <dbReference type="ChEBI" id="CHEBI:37563"/>
        <dbReference type="ChEBI" id="CHEBI:43474"/>
        <dbReference type="ChEBI" id="CHEBI:46398"/>
        <dbReference type="ChEBI" id="CHEBI:456216"/>
    </reaction>
</comment>
<comment type="activity regulation">
    <text evidence="1">Allosterically activated by GTP, when glutamine is the substrate; GTP has no effect on the reaction when ammonia is the substrate. The allosteric effector GTP functions by stabilizing the protein conformation that binds the tetrahedral intermediate(s) formed during glutamine hydrolysis. Inhibited by the product CTP, via allosteric rather than competitive inhibition.</text>
</comment>
<comment type="pathway">
    <text evidence="1">Pyrimidine metabolism; CTP biosynthesis via de novo pathway; CTP from UDP: step 2/2.</text>
</comment>
<comment type="subunit">
    <text evidence="1">Homotetramer.</text>
</comment>
<comment type="miscellaneous">
    <text evidence="1">CTPSs have evolved a hybrid strategy for distinguishing between UTP and CTP. The overlapping regions of the product feedback inhibitory and substrate sites recognize a common feature in both compounds, the triphosphate moiety. To differentiate isosteric substrate and product pyrimidine rings, an additional pocket far from the expected kinase/ligase catalytic site, specifically recognizes the cytosine and ribose portions of the product inhibitor.</text>
</comment>
<comment type="similarity">
    <text evidence="1">Belongs to the CTP synthase family.</text>
</comment>
<reference key="1">
    <citation type="submission" date="2006-01" db="EMBL/GenBank/DDBJ databases">
        <title>Complete sequence of Anaeromyxobacter dehalogenans 2CP-C.</title>
        <authorList>
            <person name="Copeland A."/>
            <person name="Lucas S."/>
            <person name="Lapidus A."/>
            <person name="Barry K."/>
            <person name="Detter J.C."/>
            <person name="Glavina T."/>
            <person name="Hammon N."/>
            <person name="Israni S."/>
            <person name="Pitluck S."/>
            <person name="Brettin T."/>
            <person name="Bruce D."/>
            <person name="Han C."/>
            <person name="Tapia R."/>
            <person name="Gilna P."/>
            <person name="Kiss H."/>
            <person name="Schmutz J."/>
            <person name="Larimer F."/>
            <person name="Land M."/>
            <person name="Kyrpides N."/>
            <person name="Anderson I."/>
            <person name="Sanford R.A."/>
            <person name="Ritalahti K.M."/>
            <person name="Thomas H.S."/>
            <person name="Kirby J.R."/>
            <person name="Zhulin I.B."/>
            <person name="Loeffler F.E."/>
            <person name="Richardson P."/>
        </authorList>
    </citation>
    <scope>NUCLEOTIDE SEQUENCE [LARGE SCALE GENOMIC DNA]</scope>
    <source>
        <strain>2CP-C</strain>
    </source>
</reference>
<dbReference type="EC" id="6.3.4.2" evidence="1"/>
<dbReference type="EMBL" id="CP000251">
    <property type="protein sequence ID" value="ABC83938.1"/>
    <property type="molecule type" value="Genomic_DNA"/>
</dbReference>
<dbReference type="RefSeq" id="WP_011423220.1">
    <property type="nucleotide sequence ID" value="NC_007760.1"/>
</dbReference>
<dbReference type="SMR" id="Q2IH81"/>
<dbReference type="STRING" id="290397.Adeh_4174"/>
<dbReference type="MEROPS" id="C26.964"/>
<dbReference type="KEGG" id="ade:Adeh_4174"/>
<dbReference type="eggNOG" id="COG0504">
    <property type="taxonomic scope" value="Bacteria"/>
</dbReference>
<dbReference type="HOGENOM" id="CLU_011675_5_0_7"/>
<dbReference type="OrthoDB" id="9801107at2"/>
<dbReference type="UniPathway" id="UPA00159">
    <property type="reaction ID" value="UER00277"/>
</dbReference>
<dbReference type="Proteomes" id="UP000001935">
    <property type="component" value="Chromosome"/>
</dbReference>
<dbReference type="GO" id="GO:0005829">
    <property type="term" value="C:cytosol"/>
    <property type="evidence" value="ECO:0007669"/>
    <property type="project" value="TreeGrafter"/>
</dbReference>
<dbReference type="GO" id="GO:0005524">
    <property type="term" value="F:ATP binding"/>
    <property type="evidence" value="ECO:0007669"/>
    <property type="project" value="UniProtKB-KW"/>
</dbReference>
<dbReference type="GO" id="GO:0003883">
    <property type="term" value="F:CTP synthase activity"/>
    <property type="evidence" value="ECO:0007669"/>
    <property type="project" value="UniProtKB-UniRule"/>
</dbReference>
<dbReference type="GO" id="GO:0004359">
    <property type="term" value="F:glutaminase activity"/>
    <property type="evidence" value="ECO:0007669"/>
    <property type="project" value="RHEA"/>
</dbReference>
<dbReference type="GO" id="GO:0042802">
    <property type="term" value="F:identical protein binding"/>
    <property type="evidence" value="ECO:0007669"/>
    <property type="project" value="TreeGrafter"/>
</dbReference>
<dbReference type="GO" id="GO:0046872">
    <property type="term" value="F:metal ion binding"/>
    <property type="evidence" value="ECO:0007669"/>
    <property type="project" value="UniProtKB-KW"/>
</dbReference>
<dbReference type="GO" id="GO:0044210">
    <property type="term" value="P:'de novo' CTP biosynthetic process"/>
    <property type="evidence" value="ECO:0007669"/>
    <property type="project" value="UniProtKB-UniRule"/>
</dbReference>
<dbReference type="GO" id="GO:0019856">
    <property type="term" value="P:pyrimidine nucleobase biosynthetic process"/>
    <property type="evidence" value="ECO:0007669"/>
    <property type="project" value="TreeGrafter"/>
</dbReference>
<dbReference type="CDD" id="cd03113">
    <property type="entry name" value="CTPS_N"/>
    <property type="match status" value="1"/>
</dbReference>
<dbReference type="CDD" id="cd01746">
    <property type="entry name" value="GATase1_CTP_Synthase"/>
    <property type="match status" value="1"/>
</dbReference>
<dbReference type="FunFam" id="3.40.50.300:FF:000009">
    <property type="entry name" value="CTP synthase"/>
    <property type="match status" value="1"/>
</dbReference>
<dbReference type="FunFam" id="3.40.50.880:FF:000002">
    <property type="entry name" value="CTP synthase"/>
    <property type="match status" value="1"/>
</dbReference>
<dbReference type="Gene3D" id="3.40.50.880">
    <property type="match status" value="1"/>
</dbReference>
<dbReference type="Gene3D" id="3.40.50.300">
    <property type="entry name" value="P-loop containing nucleotide triphosphate hydrolases"/>
    <property type="match status" value="1"/>
</dbReference>
<dbReference type="HAMAP" id="MF_01227">
    <property type="entry name" value="PyrG"/>
    <property type="match status" value="1"/>
</dbReference>
<dbReference type="InterPro" id="IPR029062">
    <property type="entry name" value="Class_I_gatase-like"/>
</dbReference>
<dbReference type="InterPro" id="IPR004468">
    <property type="entry name" value="CTP_synthase"/>
</dbReference>
<dbReference type="InterPro" id="IPR017456">
    <property type="entry name" value="CTP_synthase_N"/>
</dbReference>
<dbReference type="InterPro" id="IPR017926">
    <property type="entry name" value="GATASE"/>
</dbReference>
<dbReference type="InterPro" id="IPR033828">
    <property type="entry name" value="GATase1_CTP_Synthase"/>
</dbReference>
<dbReference type="InterPro" id="IPR027417">
    <property type="entry name" value="P-loop_NTPase"/>
</dbReference>
<dbReference type="NCBIfam" id="NF003792">
    <property type="entry name" value="PRK05380.1"/>
    <property type="match status" value="1"/>
</dbReference>
<dbReference type="NCBIfam" id="TIGR00337">
    <property type="entry name" value="PyrG"/>
    <property type="match status" value="1"/>
</dbReference>
<dbReference type="PANTHER" id="PTHR11550">
    <property type="entry name" value="CTP SYNTHASE"/>
    <property type="match status" value="1"/>
</dbReference>
<dbReference type="PANTHER" id="PTHR11550:SF0">
    <property type="entry name" value="CTP SYNTHASE-RELATED"/>
    <property type="match status" value="1"/>
</dbReference>
<dbReference type="Pfam" id="PF06418">
    <property type="entry name" value="CTP_synth_N"/>
    <property type="match status" value="1"/>
</dbReference>
<dbReference type="Pfam" id="PF00117">
    <property type="entry name" value="GATase"/>
    <property type="match status" value="1"/>
</dbReference>
<dbReference type="SUPFAM" id="SSF52317">
    <property type="entry name" value="Class I glutamine amidotransferase-like"/>
    <property type="match status" value="1"/>
</dbReference>
<dbReference type="SUPFAM" id="SSF52540">
    <property type="entry name" value="P-loop containing nucleoside triphosphate hydrolases"/>
    <property type="match status" value="1"/>
</dbReference>
<dbReference type="PROSITE" id="PS51273">
    <property type="entry name" value="GATASE_TYPE_1"/>
    <property type="match status" value="1"/>
</dbReference>